<dbReference type="EC" id="3.5.2.9" evidence="1"/>
<dbReference type="EMBL" id="CP000863">
    <property type="protein sequence ID" value="ACC56579.1"/>
    <property type="molecule type" value="Genomic_DNA"/>
</dbReference>
<dbReference type="RefSeq" id="WP_000496072.1">
    <property type="nucleotide sequence ID" value="NZ_CP031380.1"/>
</dbReference>
<dbReference type="SMR" id="B2HXI0"/>
<dbReference type="KEGG" id="abc:ACICU_01267"/>
<dbReference type="HOGENOM" id="CLU_069535_0_0_6"/>
<dbReference type="Proteomes" id="UP000008839">
    <property type="component" value="Chromosome"/>
</dbReference>
<dbReference type="GO" id="GO:0017168">
    <property type="term" value="F:5-oxoprolinase (ATP-hydrolyzing) activity"/>
    <property type="evidence" value="ECO:0007669"/>
    <property type="project" value="UniProtKB-UniRule"/>
</dbReference>
<dbReference type="GO" id="GO:0005524">
    <property type="term" value="F:ATP binding"/>
    <property type="evidence" value="ECO:0007669"/>
    <property type="project" value="UniProtKB-UniRule"/>
</dbReference>
<dbReference type="GO" id="GO:0005975">
    <property type="term" value="P:carbohydrate metabolic process"/>
    <property type="evidence" value="ECO:0007669"/>
    <property type="project" value="InterPro"/>
</dbReference>
<dbReference type="CDD" id="cd10787">
    <property type="entry name" value="LamB_YcsF_like"/>
    <property type="match status" value="1"/>
</dbReference>
<dbReference type="Gene3D" id="3.20.20.370">
    <property type="entry name" value="Glycoside hydrolase/deacetylase"/>
    <property type="match status" value="1"/>
</dbReference>
<dbReference type="HAMAP" id="MF_00691">
    <property type="entry name" value="PxpA"/>
    <property type="match status" value="1"/>
</dbReference>
<dbReference type="InterPro" id="IPR011330">
    <property type="entry name" value="Glyco_hydro/deAcase_b/a-brl"/>
</dbReference>
<dbReference type="InterPro" id="IPR005501">
    <property type="entry name" value="LamB/YcsF/PxpA-like"/>
</dbReference>
<dbReference type="NCBIfam" id="NF003814">
    <property type="entry name" value="PRK05406.1-3"/>
    <property type="match status" value="1"/>
</dbReference>
<dbReference type="NCBIfam" id="NF003816">
    <property type="entry name" value="PRK05406.1-5"/>
    <property type="match status" value="1"/>
</dbReference>
<dbReference type="PANTHER" id="PTHR30292:SF0">
    <property type="entry name" value="5-OXOPROLINASE SUBUNIT A"/>
    <property type="match status" value="1"/>
</dbReference>
<dbReference type="PANTHER" id="PTHR30292">
    <property type="entry name" value="UNCHARACTERIZED PROTEIN YBGL-RELATED"/>
    <property type="match status" value="1"/>
</dbReference>
<dbReference type="Pfam" id="PF03746">
    <property type="entry name" value="LamB_YcsF"/>
    <property type="match status" value="1"/>
</dbReference>
<dbReference type="SUPFAM" id="SSF88713">
    <property type="entry name" value="Glycoside hydrolase/deacetylase"/>
    <property type="match status" value="1"/>
</dbReference>
<protein>
    <recommendedName>
        <fullName evidence="1">5-oxoprolinase subunit A</fullName>
        <shortName evidence="1">5-OPase subunit A</shortName>
        <ecNumber evidence="1">3.5.2.9</ecNumber>
    </recommendedName>
    <alternativeName>
        <fullName evidence="1">5-oxoprolinase (ATP-hydrolyzing) subunit A</fullName>
    </alternativeName>
</protein>
<sequence length="254" mass="26909">MFVDLNSDLGESFGSWKMGNDDQILPVVTSANIACGFHAGDPLGILKTVRKAVELGVTIGAHVSYPDLVGFGRRNMDLSRDELIADVLYQISALDGLAKVAGSKVQYVKPHGALYNTIAHDQAQAAAVIDAIKMYNPELVLVALAGSNLVEQARAAGLKVVSEAFADRAYNSDGSLVSRRLEGAVLHDSAFVASRVVSMLKNGGVESIDGVFTPIQADTICLHGDTDGALEMSAAIKAELVKNNIEIRPFVNKA</sequence>
<reference key="1">
    <citation type="journal article" date="2008" name="Antimicrob. Agents Chemother.">
        <title>Whole-genome pyrosequencing of an epidemic multidrug-resistant Acinetobacter baumannii strain belonging to the European clone II group.</title>
        <authorList>
            <person name="Iacono M."/>
            <person name="Villa L."/>
            <person name="Fortini D."/>
            <person name="Bordoni R."/>
            <person name="Imperi F."/>
            <person name="Bonnal R.J."/>
            <person name="Sicheritz-Ponten T."/>
            <person name="De Bellis G."/>
            <person name="Visca P."/>
            <person name="Cassone A."/>
            <person name="Carattoli A."/>
        </authorList>
    </citation>
    <scope>NUCLEOTIDE SEQUENCE [LARGE SCALE GENOMIC DNA]</scope>
    <source>
        <strain>ACICU</strain>
    </source>
</reference>
<organism>
    <name type="scientific">Acinetobacter baumannii (strain ACICU)</name>
    <dbReference type="NCBI Taxonomy" id="405416"/>
    <lineage>
        <taxon>Bacteria</taxon>
        <taxon>Pseudomonadati</taxon>
        <taxon>Pseudomonadota</taxon>
        <taxon>Gammaproteobacteria</taxon>
        <taxon>Moraxellales</taxon>
        <taxon>Moraxellaceae</taxon>
        <taxon>Acinetobacter</taxon>
        <taxon>Acinetobacter calcoaceticus/baumannii complex</taxon>
    </lineage>
</organism>
<evidence type="ECO:0000255" key="1">
    <source>
        <dbReference type="HAMAP-Rule" id="MF_00691"/>
    </source>
</evidence>
<proteinExistence type="inferred from homology"/>
<accession>B2HXI0</accession>
<gene>
    <name evidence="1" type="primary">pxpA</name>
    <name type="ordered locus">ACICU_01267</name>
</gene>
<feature type="chain" id="PRO_1000132034" description="5-oxoprolinase subunit A">
    <location>
        <begin position="1"/>
        <end position="254"/>
    </location>
</feature>
<name>PXPA_ACIBC</name>
<keyword id="KW-0067">ATP-binding</keyword>
<keyword id="KW-0378">Hydrolase</keyword>
<keyword id="KW-0547">Nucleotide-binding</keyword>
<comment type="function">
    <text evidence="1">Catalyzes the cleavage of 5-oxoproline to form L-glutamate coupled to the hydrolysis of ATP to ADP and inorganic phosphate.</text>
</comment>
<comment type="catalytic activity">
    <reaction evidence="1">
        <text>5-oxo-L-proline + ATP + 2 H2O = L-glutamate + ADP + phosphate + H(+)</text>
        <dbReference type="Rhea" id="RHEA:10348"/>
        <dbReference type="ChEBI" id="CHEBI:15377"/>
        <dbReference type="ChEBI" id="CHEBI:15378"/>
        <dbReference type="ChEBI" id="CHEBI:29985"/>
        <dbReference type="ChEBI" id="CHEBI:30616"/>
        <dbReference type="ChEBI" id="CHEBI:43474"/>
        <dbReference type="ChEBI" id="CHEBI:58402"/>
        <dbReference type="ChEBI" id="CHEBI:456216"/>
        <dbReference type="EC" id="3.5.2.9"/>
    </reaction>
</comment>
<comment type="subunit">
    <text evidence="1">Forms a complex composed of PxpA, PxpB and PxpC.</text>
</comment>
<comment type="similarity">
    <text evidence="1">Belongs to the LamB/PxpA family.</text>
</comment>